<feature type="chain" id="PRO_0000274380" description="Exocyst complex component 3-like protein 4">
    <location>
        <begin position="1"/>
        <end position="722"/>
    </location>
</feature>
<feature type="region of interest" description="Disordered" evidence="1">
    <location>
        <begin position="1"/>
        <end position="53"/>
    </location>
</feature>
<feature type="region of interest" description="Disordered" evidence="1">
    <location>
        <begin position="92"/>
        <end position="131"/>
    </location>
</feature>
<feature type="compositionally biased region" description="Basic and acidic residues" evidence="1">
    <location>
        <begin position="34"/>
        <end position="46"/>
    </location>
</feature>
<feature type="compositionally biased region" description="Polar residues" evidence="1">
    <location>
        <begin position="113"/>
        <end position="122"/>
    </location>
</feature>
<feature type="modified residue" description="Phosphoserine" evidence="4">
    <location>
        <position position="52"/>
    </location>
</feature>
<feature type="modified residue" description="Phosphoserine" evidence="5">
    <location>
        <position position="513"/>
    </location>
</feature>
<feature type="sequence variant" id="VAR_030273" description="In dbSNP:rs2297067." evidence="2">
    <original>R</original>
    <variation>W</variation>
    <location>
        <position position="77"/>
    </location>
</feature>
<feature type="sequence variant" id="VAR_030274" description="In dbSNP:rs2297066." evidence="2">
    <original>D</original>
    <variation>E</variation>
    <location>
        <position position="93"/>
    </location>
</feature>
<feature type="sequence variant" id="VAR_030275" description="In dbSNP:rs10131298." evidence="2">
    <original>L</original>
    <variation>H</variation>
    <location>
        <position position="185"/>
    </location>
</feature>
<feature type="sequence variant" id="VAR_030276" description="In dbSNP:rs729184.">
    <original>Q</original>
    <variation>R</variation>
    <location>
        <position position="675"/>
    </location>
</feature>
<feature type="sequence variant" id="VAR_062863" description="In dbSNP:rs744153." evidence="2">
    <original>Q</original>
    <variation>E</variation>
    <location>
        <position position="685"/>
    </location>
</feature>
<keyword id="KW-0597">Phosphoprotein</keyword>
<keyword id="KW-1267">Proteomics identification</keyword>
<keyword id="KW-1185">Reference proteome</keyword>
<organism>
    <name type="scientific">Homo sapiens</name>
    <name type="common">Human</name>
    <dbReference type="NCBI Taxonomy" id="9606"/>
    <lineage>
        <taxon>Eukaryota</taxon>
        <taxon>Metazoa</taxon>
        <taxon>Chordata</taxon>
        <taxon>Craniata</taxon>
        <taxon>Vertebrata</taxon>
        <taxon>Euteleostomi</taxon>
        <taxon>Mammalia</taxon>
        <taxon>Eutheria</taxon>
        <taxon>Euarchontoglires</taxon>
        <taxon>Primates</taxon>
        <taxon>Haplorrhini</taxon>
        <taxon>Catarrhini</taxon>
        <taxon>Hominidae</taxon>
        <taxon>Homo</taxon>
    </lineage>
</organism>
<comment type="similarity">
    <text evidence="3">Belongs to the SEC6 family.</text>
</comment>
<protein>
    <recommendedName>
        <fullName>Exocyst complex component 3-like protein 4</fullName>
    </recommendedName>
</protein>
<sequence length="722" mass="79896">MPSPQTDTPGPELQSPKEAEEPQTPAQGSRRTSSRKEPNAHRKDGTRLGLGSLRQAFSRASQRALTQVSKEDTGLFRRSSCSLFRSFRQALNDGPATGHSQATPEVPSGVMNGVSQQASTGAASEELKPEAEGKSVADLITERQLLAAFEQLLRLETLLVAEKASRTFEQDPTAFARRAMDVCLLYDGLAAEIGAIVRETLDSDGVDAAALAELARVVSAEEEAHPSPPDDGDFLRTPRRWRQHWEEAVRRSAQERVRRPGAGWAFGEAEGASGLAQLLAELGGLVRRDLQKVRQEVQPAYAAAGFPAWEVYLRAFHSAVAQRLQELARDARGCEQLYILLDWAANVYGSPDFLGAPGLALPAEPLPPLLAPDVWARLESDYTSFLEAKIASCFDSILQLEQSHWAAAEVPEVLQGLYQAPLSMDVHMLVAEHVKAAGAISAELEATTLRICTRALGLFVPRFEKAFLASEAVSEPHLGAYINACEELRTSLLSRFPGTQEELEKPLVTATCSFQKHLLQGLQRELQPLFRVVCTRDWLTQDWLHPLMDKVVTFAGHLQRVARPRAQETLQEVHRFVVREYLARALRPRERFRGMERMHGSQKMSLDAQAISDTFQGLGSEATWLDQAIQCVAEILGETYKDDIQRHLETLIRSYPDIRRDHILAILALRRLGRQRNQHLLQHTQDLLRAAAGAAGAEAPRGRVLFEEIKVPSAMAVLITCV</sequence>
<accession>Q17RC7</accession>
<accession>Q14CR2</accession>
<proteinExistence type="evidence at protein level"/>
<dbReference type="EMBL" id="AL161669">
    <property type="status" value="NOT_ANNOTATED_CDS"/>
    <property type="molecule type" value="Genomic_DNA"/>
</dbReference>
<dbReference type="EMBL" id="BC113655">
    <property type="protein sequence ID" value="AAI13656.1"/>
    <property type="molecule type" value="mRNA"/>
</dbReference>
<dbReference type="EMBL" id="BC117375">
    <property type="protein sequence ID" value="AAI17376.1"/>
    <property type="molecule type" value="mRNA"/>
</dbReference>
<dbReference type="CCDS" id="CCDS32163.1"/>
<dbReference type="RefSeq" id="NP_001071062.1">
    <property type="nucleotide sequence ID" value="NM_001077594.2"/>
</dbReference>
<dbReference type="RefSeq" id="NP_001381870.1">
    <property type="nucleotide sequence ID" value="NM_001394941.1"/>
</dbReference>
<dbReference type="RefSeq" id="NP_001381871.1">
    <property type="nucleotide sequence ID" value="NM_001394942.1"/>
</dbReference>
<dbReference type="RefSeq" id="XP_011535625.2">
    <property type="nucleotide sequence ID" value="XM_011537323.4"/>
</dbReference>
<dbReference type="RefSeq" id="XP_011535627.1">
    <property type="nucleotide sequence ID" value="XM_011537325.2"/>
</dbReference>
<dbReference type="RefSeq" id="XP_011535629.1">
    <property type="nucleotide sequence ID" value="XM_011537327.2"/>
</dbReference>
<dbReference type="RefSeq" id="XP_011535630.1">
    <property type="nucleotide sequence ID" value="XM_011537328.2"/>
</dbReference>
<dbReference type="RefSeq" id="XP_011535631.1">
    <property type="nucleotide sequence ID" value="XM_011537329.3"/>
</dbReference>
<dbReference type="RefSeq" id="XP_011535632.1">
    <property type="nucleotide sequence ID" value="XM_011537330.3"/>
</dbReference>
<dbReference type="RefSeq" id="XP_011535633.1">
    <property type="nucleotide sequence ID" value="XM_011537331.2"/>
</dbReference>
<dbReference type="RefSeq" id="XP_011535634.1">
    <property type="nucleotide sequence ID" value="XM_011537332.3"/>
</dbReference>
<dbReference type="SMR" id="Q17RC7"/>
<dbReference type="BioGRID" id="124883">
    <property type="interactions" value="4"/>
</dbReference>
<dbReference type="FunCoup" id="Q17RC7">
    <property type="interactions" value="8"/>
</dbReference>
<dbReference type="STRING" id="9606.ENSP00000369409"/>
<dbReference type="GlyCosmos" id="Q17RC7">
    <property type="glycosylation" value="1 site, 1 glycan"/>
</dbReference>
<dbReference type="GlyGen" id="Q17RC7">
    <property type="glycosylation" value="1 site, 1 O-linked glycan (1 site)"/>
</dbReference>
<dbReference type="iPTMnet" id="Q17RC7"/>
<dbReference type="PhosphoSitePlus" id="Q17RC7"/>
<dbReference type="SwissPalm" id="Q17RC7"/>
<dbReference type="BioMuta" id="EXOC3L4"/>
<dbReference type="DMDM" id="290457635"/>
<dbReference type="jPOST" id="Q17RC7"/>
<dbReference type="MassIVE" id="Q17RC7"/>
<dbReference type="PaxDb" id="9606-ENSP00000369409"/>
<dbReference type="PeptideAtlas" id="Q17RC7"/>
<dbReference type="ProteomicsDB" id="61146"/>
<dbReference type="Antibodypedia" id="49636">
    <property type="antibodies" value="6 antibodies from 6 providers"/>
</dbReference>
<dbReference type="DNASU" id="91828"/>
<dbReference type="Ensembl" id="ENST00000380069.7">
    <property type="protein sequence ID" value="ENSP00000369409.3"/>
    <property type="gene ID" value="ENSG00000205436.8"/>
</dbReference>
<dbReference type="Ensembl" id="ENST00000687959.1">
    <property type="protein sequence ID" value="ENSP00000508483.1"/>
    <property type="gene ID" value="ENSG00000205436.8"/>
</dbReference>
<dbReference type="Ensembl" id="ENST00000688303.1">
    <property type="protein sequence ID" value="ENSP00000509130.1"/>
    <property type="gene ID" value="ENSG00000205436.8"/>
</dbReference>
<dbReference type="GeneID" id="91828"/>
<dbReference type="KEGG" id="hsa:91828"/>
<dbReference type="MANE-Select" id="ENST00000688303.1">
    <property type="protein sequence ID" value="ENSP00000509130.1"/>
    <property type="RefSeq nucleotide sequence ID" value="NM_001077594.2"/>
    <property type="RefSeq protein sequence ID" value="NP_001071062.1"/>
</dbReference>
<dbReference type="UCSC" id="uc001ymk.4">
    <property type="organism name" value="human"/>
</dbReference>
<dbReference type="AGR" id="HGNC:20120"/>
<dbReference type="CTD" id="91828"/>
<dbReference type="DisGeNET" id="91828"/>
<dbReference type="GeneCards" id="EXOC3L4"/>
<dbReference type="HGNC" id="HGNC:20120">
    <property type="gene designation" value="EXOC3L4"/>
</dbReference>
<dbReference type="HPA" id="ENSG00000205436">
    <property type="expression patterns" value="Group enriched (intestine, liver)"/>
</dbReference>
<dbReference type="MIM" id="621085">
    <property type="type" value="gene"/>
</dbReference>
<dbReference type="neXtProt" id="NX_Q17RC7"/>
<dbReference type="OpenTargets" id="ENSG00000205436"/>
<dbReference type="PharmGKB" id="PA134980508"/>
<dbReference type="VEuPathDB" id="HostDB:ENSG00000205436"/>
<dbReference type="eggNOG" id="KOG2286">
    <property type="taxonomic scope" value="Eukaryota"/>
</dbReference>
<dbReference type="GeneTree" id="ENSGT01030000234613"/>
<dbReference type="HOGENOM" id="CLU_023686_0_0_1"/>
<dbReference type="InParanoid" id="Q17RC7"/>
<dbReference type="OMA" id="MDVHMLV"/>
<dbReference type="OrthoDB" id="190098at2759"/>
<dbReference type="PAN-GO" id="Q17RC7">
    <property type="GO annotations" value="4 GO annotations based on evolutionary models"/>
</dbReference>
<dbReference type="PhylomeDB" id="Q17RC7"/>
<dbReference type="TreeFam" id="TF314979"/>
<dbReference type="PathwayCommons" id="Q17RC7"/>
<dbReference type="BioGRID-ORCS" id="91828">
    <property type="hits" value="13 hits in 1153 CRISPR screens"/>
</dbReference>
<dbReference type="GenomeRNAi" id="91828"/>
<dbReference type="Pharos" id="Q17RC7">
    <property type="development level" value="Tdark"/>
</dbReference>
<dbReference type="PRO" id="PR:Q17RC7"/>
<dbReference type="Proteomes" id="UP000005640">
    <property type="component" value="Chromosome 14"/>
</dbReference>
<dbReference type="RNAct" id="Q17RC7">
    <property type="molecule type" value="protein"/>
</dbReference>
<dbReference type="Bgee" id="ENSG00000205436">
    <property type="expression patterns" value="Expressed in right lobe of liver and 120 other cell types or tissues"/>
</dbReference>
<dbReference type="ExpressionAtlas" id="Q17RC7">
    <property type="expression patterns" value="baseline and differential"/>
</dbReference>
<dbReference type="GO" id="GO:0000145">
    <property type="term" value="C:exocyst"/>
    <property type="evidence" value="ECO:0000318"/>
    <property type="project" value="GO_Central"/>
</dbReference>
<dbReference type="GO" id="GO:0000149">
    <property type="term" value="F:SNARE binding"/>
    <property type="evidence" value="ECO:0000318"/>
    <property type="project" value="GO_Central"/>
</dbReference>
<dbReference type="GO" id="GO:0051601">
    <property type="term" value="P:exocyst localization"/>
    <property type="evidence" value="ECO:0000318"/>
    <property type="project" value="GO_Central"/>
</dbReference>
<dbReference type="GO" id="GO:0006887">
    <property type="term" value="P:exocytosis"/>
    <property type="evidence" value="ECO:0000318"/>
    <property type="project" value="GO_Central"/>
</dbReference>
<dbReference type="FunFam" id="1.10.357.70:FF:000006">
    <property type="entry name" value="Exocyst complex component 3 like 4"/>
    <property type="match status" value="1"/>
</dbReference>
<dbReference type="Gene3D" id="1.10.357.70">
    <property type="entry name" value="Exocyst complex component Sec6, C-terminal domain"/>
    <property type="match status" value="1"/>
</dbReference>
<dbReference type="InterPro" id="IPR010326">
    <property type="entry name" value="EXOC3/Sec6"/>
</dbReference>
<dbReference type="InterPro" id="IPR042532">
    <property type="entry name" value="EXOC3/Sec6_C"/>
</dbReference>
<dbReference type="PANTHER" id="PTHR21292:SF14">
    <property type="entry name" value="EXOCYST COMPLEX COMPONENT 3-LIKE PROTEIN 4"/>
    <property type="match status" value="1"/>
</dbReference>
<dbReference type="PANTHER" id="PTHR21292">
    <property type="entry name" value="EXOCYST COMPLEX COMPONENT SEC6-RELATED"/>
    <property type="match status" value="1"/>
</dbReference>
<dbReference type="Pfam" id="PF06046">
    <property type="entry name" value="Sec6"/>
    <property type="match status" value="1"/>
</dbReference>
<reference key="1">
    <citation type="journal article" date="2003" name="Nature">
        <title>The DNA sequence and analysis of human chromosome 14.</title>
        <authorList>
            <person name="Heilig R."/>
            <person name="Eckenberg R."/>
            <person name="Petit J.-L."/>
            <person name="Fonknechten N."/>
            <person name="Da Silva C."/>
            <person name="Cattolico L."/>
            <person name="Levy M."/>
            <person name="Barbe V."/>
            <person name="De Berardinis V."/>
            <person name="Ureta-Vidal A."/>
            <person name="Pelletier E."/>
            <person name="Vico V."/>
            <person name="Anthouard V."/>
            <person name="Rowen L."/>
            <person name="Madan A."/>
            <person name="Qin S."/>
            <person name="Sun H."/>
            <person name="Du H."/>
            <person name="Pepin K."/>
            <person name="Artiguenave F."/>
            <person name="Robert C."/>
            <person name="Cruaud C."/>
            <person name="Bruels T."/>
            <person name="Jaillon O."/>
            <person name="Friedlander L."/>
            <person name="Samson G."/>
            <person name="Brottier P."/>
            <person name="Cure S."/>
            <person name="Segurens B."/>
            <person name="Aniere F."/>
            <person name="Samain S."/>
            <person name="Crespeau H."/>
            <person name="Abbasi N."/>
            <person name="Aiach N."/>
            <person name="Boscus D."/>
            <person name="Dickhoff R."/>
            <person name="Dors M."/>
            <person name="Dubois I."/>
            <person name="Friedman C."/>
            <person name="Gouyvenoux M."/>
            <person name="James R."/>
            <person name="Madan A."/>
            <person name="Mairey-Estrada B."/>
            <person name="Mangenot S."/>
            <person name="Martins N."/>
            <person name="Menard M."/>
            <person name="Oztas S."/>
            <person name="Ratcliffe A."/>
            <person name="Shaffer T."/>
            <person name="Trask B."/>
            <person name="Vacherie B."/>
            <person name="Bellemere C."/>
            <person name="Belser C."/>
            <person name="Besnard-Gonnet M."/>
            <person name="Bartol-Mavel D."/>
            <person name="Boutard M."/>
            <person name="Briez-Silla S."/>
            <person name="Combette S."/>
            <person name="Dufosse-Laurent V."/>
            <person name="Ferron C."/>
            <person name="Lechaplais C."/>
            <person name="Louesse C."/>
            <person name="Muselet D."/>
            <person name="Magdelenat G."/>
            <person name="Pateau E."/>
            <person name="Petit E."/>
            <person name="Sirvain-Trukniewicz P."/>
            <person name="Trybou A."/>
            <person name="Vega-Czarny N."/>
            <person name="Bataille E."/>
            <person name="Bluet E."/>
            <person name="Bordelais I."/>
            <person name="Dubois M."/>
            <person name="Dumont C."/>
            <person name="Guerin T."/>
            <person name="Haffray S."/>
            <person name="Hammadi R."/>
            <person name="Muanga J."/>
            <person name="Pellouin V."/>
            <person name="Robert D."/>
            <person name="Wunderle E."/>
            <person name="Gauguet G."/>
            <person name="Roy A."/>
            <person name="Sainte-Marthe L."/>
            <person name="Verdier J."/>
            <person name="Verdier-Discala C."/>
            <person name="Hillier L.W."/>
            <person name="Fulton L."/>
            <person name="McPherson J."/>
            <person name="Matsuda F."/>
            <person name="Wilson R."/>
            <person name="Scarpelli C."/>
            <person name="Gyapay G."/>
            <person name="Wincker P."/>
            <person name="Saurin W."/>
            <person name="Quetier F."/>
            <person name="Waterston R."/>
            <person name="Hood L."/>
            <person name="Weissenbach J."/>
        </authorList>
    </citation>
    <scope>NUCLEOTIDE SEQUENCE [LARGE SCALE GENOMIC DNA]</scope>
</reference>
<reference key="2">
    <citation type="journal article" date="2004" name="Genome Res.">
        <title>The status, quality, and expansion of the NIH full-length cDNA project: the Mammalian Gene Collection (MGC).</title>
        <authorList>
            <consortium name="The MGC Project Team"/>
        </authorList>
    </citation>
    <scope>NUCLEOTIDE SEQUENCE [LARGE SCALE MRNA]</scope>
    <scope>VARIANTS TRP-77; GLU-93; HIS-185 AND GLU-685</scope>
    <source>
        <tissue>Liver</tissue>
    </source>
</reference>
<reference key="3">
    <citation type="journal article" date="2013" name="J. Proteome Res.">
        <title>Toward a comprehensive characterization of a human cancer cell phosphoproteome.</title>
        <authorList>
            <person name="Zhou H."/>
            <person name="Di Palma S."/>
            <person name="Preisinger C."/>
            <person name="Peng M."/>
            <person name="Polat A.N."/>
            <person name="Heck A.J."/>
            <person name="Mohammed S."/>
        </authorList>
    </citation>
    <scope>PHOSPHORYLATION [LARGE SCALE ANALYSIS] AT SER-52</scope>
    <scope>IDENTIFICATION BY MASS SPECTROMETRY [LARGE SCALE ANALYSIS]</scope>
    <source>
        <tissue>Erythroleukemia</tissue>
    </source>
</reference>
<reference key="4">
    <citation type="journal article" date="2014" name="J. Proteomics">
        <title>An enzyme assisted RP-RPLC approach for in-depth analysis of human liver phosphoproteome.</title>
        <authorList>
            <person name="Bian Y."/>
            <person name="Song C."/>
            <person name="Cheng K."/>
            <person name="Dong M."/>
            <person name="Wang F."/>
            <person name="Huang J."/>
            <person name="Sun D."/>
            <person name="Wang L."/>
            <person name="Ye M."/>
            <person name="Zou H."/>
        </authorList>
    </citation>
    <scope>PHOSPHORYLATION [LARGE SCALE ANALYSIS] AT SER-513</scope>
    <scope>IDENTIFICATION BY MASS SPECTROMETRY [LARGE SCALE ANALYSIS]</scope>
    <source>
        <tissue>Liver</tissue>
    </source>
</reference>
<evidence type="ECO:0000256" key="1">
    <source>
        <dbReference type="SAM" id="MobiDB-lite"/>
    </source>
</evidence>
<evidence type="ECO:0000269" key="2">
    <source>
    </source>
</evidence>
<evidence type="ECO:0000305" key="3"/>
<evidence type="ECO:0007744" key="4">
    <source>
    </source>
</evidence>
<evidence type="ECO:0007744" key="5">
    <source>
    </source>
</evidence>
<name>EX3L4_HUMAN</name>
<gene>
    <name type="primary">EXOC3L4</name>
    <name type="synonym">C14orf73</name>
</gene>